<dbReference type="EC" id="4.1.1.11" evidence="1"/>
<dbReference type="EMBL" id="AP008226">
    <property type="protein sequence ID" value="BAD70429.1"/>
    <property type="molecule type" value="Genomic_DNA"/>
</dbReference>
<dbReference type="RefSeq" id="YP_143872.1">
    <property type="nucleotide sequence ID" value="NC_006461.1"/>
</dbReference>
<dbReference type="PDB" id="1VC3">
    <property type="method" value="X-ray"/>
    <property type="resolution" value="1.50 A"/>
    <property type="chains" value="A=1-24, B=26-120"/>
</dbReference>
<dbReference type="PDB" id="2EEO">
    <property type="method" value="X-ray"/>
    <property type="resolution" value="1.60 A"/>
    <property type="chains" value="A=1-24, B=26-120"/>
</dbReference>
<dbReference type="PDBsum" id="1VC3"/>
<dbReference type="PDBsum" id="2EEO"/>
<dbReference type="SMR" id="Q5SKN7"/>
<dbReference type="EnsemblBacteria" id="BAD70429">
    <property type="protein sequence ID" value="BAD70429"/>
    <property type="gene ID" value="BAD70429"/>
</dbReference>
<dbReference type="KEGG" id="ttj:TTHA0606"/>
<dbReference type="PATRIC" id="fig|300852.9.peg.604"/>
<dbReference type="eggNOG" id="COG0853">
    <property type="taxonomic scope" value="Bacteria"/>
</dbReference>
<dbReference type="HOGENOM" id="CLU_115305_2_0_0"/>
<dbReference type="PhylomeDB" id="Q5SKN7"/>
<dbReference type="UniPathway" id="UPA00028">
    <property type="reaction ID" value="UER00002"/>
</dbReference>
<dbReference type="EvolutionaryTrace" id="Q5SKN7"/>
<dbReference type="Proteomes" id="UP000000532">
    <property type="component" value="Chromosome"/>
</dbReference>
<dbReference type="GO" id="GO:0005829">
    <property type="term" value="C:cytosol"/>
    <property type="evidence" value="ECO:0007669"/>
    <property type="project" value="TreeGrafter"/>
</dbReference>
<dbReference type="GO" id="GO:0004068">
    <property type="term" value="F:aspartate 1-decarboxylase activity"/>
    <property type="evidence" value="ECO:0007669"/>
    <property type="project" value="UniProtKB-UniRule"/>
</dbReference>
<dbReference type="GO" id="GO:0006523">
    <property type="term" value="P:alanine biosynthetic process"/>
    <property type="evidence" value="ECO:0007669"/>
    <property type="project" value="InterPro"/>
</dbReference>
<dbReference type="GO" id="GO:0015940">
    <property type="term" value="P:pantothenate biosynthetic process"/>
    <property type="evidence" value="ECO:0007669"/>
    <property type="project" value="UniProtKB-UniRule"/>
</dbReference>
<dbReference type="CDD" id="cd06919">
    <property type="entry name" value="Asp_decarbox"/>
    <property type="match status" value="1"/>
</dbReference>
<dbReference type="Gene3D" id="2.40.40.20">
    <property type="match status" value="1"/>
</dbReference>
<dbReference type="HAMAP" id="MF_00446">
    <property type="entry name" value="PanD"/>
    <property type="match status" value="1"/>
</dbReference>
<dbReference type="InterPro" id="IPR009010">
    <property type="entry name" value="Asp_de-COase-like_dom_sf"/>
</dbReference>
<dbReference type="InterPro" id="IPR003190">
    <property type="entry name" value="Asp_decarbox"/>
</dbReference>
<dbReference type="NCBIfam" id="TIGR00223">
    <property type="entry name" value="panD"/>
    <property type="match status" value="1"/>
</dbReference>
<dbReference type="PANTHER" id="PTHR21012">
    <property type="entry name" value="ASPARTATE 1-DECARBOXYLASE"/>
    <property type="match status" value="1"/>
</dbReference>
<dbReference type="PANTHER" id="PTHR21012:SF0">
    <property type="entry name" value="ASPARTATE 1-DECARBOXYLASE"/>
    <property type="match status" value="1"/>
</dbReference>
<dbReference type="Pfam" id="PF02261">
    <property type="entry name" value="Asp_decarbox"/>
    <property type="match status" value="1"/>
</dbReference>
<dbReference type="PIRSF" id="PIRSF006246">
    <property type="entry name" value="Asp_decarbox"/>
    <property type="match status" value="1"/>
</dbReference>
<dbReference type="SUPFAM" id="SSF50692">
    <property type="entry name" value="ADC-like"/>
    <property type="match status" value="1"/>
</dbReference>
<name>PAND_THET8</name>
<organism>
    <name type="scientific">Thermus thermophilus (strain ATCC 27634 / DSM 579 / HB8)</name>
    <dbReference type="NCBI Taxonomy" id="300852"/>
    <lineage>
        <taxon>Bacteria</taxon>
        <taxon>Thermotogati</taxon>
        <taxon>Deinococcota</taxon>
        <taxon>Deinococci</taxon>
        <taxon>Thermales</taxon>
        <taxon>Thermaceae</taxon>
        <taxon>Thermus</taxon>
    </lineage>
</organism>
<accession>Q5SKN7</accession>
<proteinExistence type="evidence at protein level"/>
<protein>
    <recommendedName>
        <fullName evidence="1">Aspartate 1-decarboxylase</fullName>
        <ecNumber evidence="1">4.1.1.11</ecNumber>
    </recommendedName>
    <alternativeName>
        <fullName evidence="1">Aspartate alpha-decarboxylase</fullName>
    </alternativeName>
    <component>
        <recommendedName>
            <fullName evidence="1">Aspartate 1-decarboxylase beta chain</fullName>
        </recommendedName>
    </component>
    <component>
        <recommendedName>
            <fullName evidence="1">Aspartate 1-decarboxylase alpha chain</fullName>
        </recommendedName>
    </component>
</protein>
<sequence length="120" mass="13095">MKRVMFHAKIHRATVTQADLHYVGSVTVDQDLLDAAGILPFEQVDIYDITNGARLTTYALPGERGSGVIGINGAAAHLVKPGDLVILVAYGVFDEEEARNLKPTVVLVDERNRILEVRKG</sequence>
<comment type="function">
    <text evidence="1">Catalyzes the pyruvoyl-dependent decarboxylation of aspartate to produce beta-alanine.</text>
</comment>
<comment type="catalytic activity">
    <reaction evidence="1">
        <text>L-aspartate + H(+) = beta-alanine + CO2</text>
        <dbReference type="Rhea" id="RHEA:19497"/>
        <dbReference type="ChEBI" id="CHEBI:15378"/>
        <dbReference type="ChEBI" id="CHEBI:16526"/>
        <dbReference type="ChEBI" id="CHEBI:29991"/>
        <dbReference type="ChEBI" id="CHEBI:57966"/>
        <dbReference type="EC" id="4.1.1.11"/>
    </reaction>
</comment>
<comment type="cofactor">
    <cofactor evidence="1">
        <name>pyruvate</name>
        <dbReference type="ChEBI" id="CHEBI:15361"/>
    </cofactor>
    <text evidence="1">Binds 1 pyruvoyl group covalently per subunit.</text>
</comment>
<comment type="pathway">
    <text evidence="1">Cofactor biosynthesis; (R)-pantothenate biosynthesis; beta-alanine from L-aspartate: step 1/1.</text>
</comment>
<comment type="subunit">
    <text evidence="1">Heterooctamer of four alpha and four beta subunits.</text>
</comment>
<comment type="subcellular location">
    <subcellularLocation>
        <location evidence="1">Cytoplasm</location>
    </subcellularLocation>
</comment>
<comment type="PTM">
    <text evidence="1">Is synthesized initially as an inactive proenzyme, which is activated by self-cleavage at a specific serine bond to produce a beta-subunit with a hydroxyl group at its C-terminus and an alpha-subunit with a pyruvoyl group at its N-terminus.</text>
</comment>
<comment type="similarity">
    <text evidence="1">Belongs to the PanD family.</text>
</comment>
<reference key="1">
    <citation type="submission" date="2004-11" db="EMBL/GenBank/DDBJ databases">
        <title>Complete genome sequence of Thermus thermophilus HB8.</title>
        <authorList>
            <person name="Masui R."/>
            <person name="Kurokawa K."/>
            <person name="Nakagawa N."/>
            <person name="Tokunaga F."/>
            <person name="Koyama Y."/>
            <person name="Shibata T."/>
            <person name="Oshima T."/>
            <person name="Yokoyama S."/>
            <person name="Yasunaga T."/>
            <person name="Kuramitsu S."/>
        </authorList>
    </citation>
    <scope>NUCLEOTIDE SEQUENCE [LARGE SCALE GENOMIC DNA]</scope>
    <source>
        <strain>ATCC 27634 / DSM 579 / HB8</strain>
    </source>
</reference>
<feature type="chain" id="PRO_0000023183" description="Aspartate 1-decarboxylase beta chain" evidence="1">
    <location>
        <begin position="1"/>
        <end position="24"/>
    </location>
</feature>
<feature type="chain" id="PRO_0000023184" description="Aspartate 1-decarboxylase alpha chain" evidence="1">
    <location>
        <begin position="25"/>
        <end position="120"/>
    </location>
</feature>
<feature type="active site" description="Schiff-base intermediate with substrate; via pyruvic acid" evidence="1">
    <location>
        <position position="25"/>
    </location>
</feature>
<feature type="active site" description="Proton donor" evidence="1">
    <location>
        <position position="58"/>
    </location>
</feature>
<feature type="binding site" evidence="1">
    <location>
        <position position="57"/>
    </location>
    <ligand>
        <name>substrate</name>
    </ligand>
</feature>
<feature type="binding site" evidence="1">
    <location>
        <begin position="73"/>
        <end position="75"/>
    </location>
    <ligand>
        <name>substrate</name>
    </ligand>
</feature>
<feature type="modified residue" description="Pyruvic acid (Ser)" evidence="1">
    <location>
        <position position="25"/>
    </location>
</feature>
<feature type="strand" evidence="2">
    <location>
        <begin position="3"/>
        <end position="14"/>
    </location>
</feature>
<feature type="strand" evidence="2">
    <location>
        <begin position="17"/>
        <end position="19"/>
    </location>
</feature>
<feature type="strand" evidence="2">
    <location>
        <begin position="27"/>
        <end position="29"/>
    </location>
</feature>
<feature type="helix" evidence="2">
    <location>
        <begin position="30"/>
        <end position="36"/>
    </location>
</feature>
<feature type="strand" evidence="2">
    <location>
        <begin position="43"/>
        <end position="48"/>
    </location>
</feature>
<feature type="turn" evidence="2">
    <location>
        <begin position="49"/>
        <end position="51"/>
    </location>
</feature>
<feature type="strand" evidence="2">
    <location>
        <begin position="54"/>
        <end position="58"/>
    </location>
</feature>
<feature type="strand" evidence="2">
    <location>
        <begin position="60"/>
        <end position="62"/>
    </location>
</feature>
<feature type="turn" evidence="2">
    <location>
        <begin position="64"/>
        <end position="67"/>
    </location>
</feature>
<feature type="strand" evidence="2">
    <location>
        <begin position="69"/>
        <end position="72"/>
    </location>
</feature>
<feature type="helix" evidence="2">
    <location>
        <begin position="73"/>
        <end position="77"/>
    </location>
</feature>
<feature type="strand" evidence="2">
    <location>
        <begin position="84"/>
        <end position="93"/>
    </location>
</feature>
<feature type="helix" evidence="2">
    <location>
        <begin position="95"/>
        <end position="98"/>
    </location>
</feature>
<feature type="strand" evidence="2">
    <location>
        <begin position="104"/>
        <end position="108"/>
    </location>
</feature>
<feature type="strand" evidence="2">
    <location>
        <begin position="114"/>
        <end position="119"/>
    </location>
</feature>
<evidence type="ECO:0000255" key="1">
    <source>
        <dbReference type="HAMAP-Rule" id="MF_00446"/>
    </source>
</evidence>
<evidence type="ECO:0007829" key="2">
    <source>
        <dbReference type="PDB" id="1VC3"/>
    </source>
</evidence>
<gene>
    <name evidence="1" type="primary">panD</name>
    <name type="ordered locus">TTHA0606</name>
</gene>
<keyword id="KW-0002">3D-structure</keyword>
<keyword id="KW-0068">Autocatalytic cleavage</keyword>
<keyword id="KW-0963">Cytoplasm</keyword>
<keyword id="KW-0210">Decarboxylase</keyword>
<keyword id="KW-0456">Lyase</keyword>
<keyword id="KW-0566">Pantothenate biosynthesis</keyword>
<keyword id="KW-0670">Pyruvate</keyword>
<keyword id="KW-1185">Reference proteome</keyword>
<keyword id="KW-0704">Schiff base</keyword>
<keyword id="KW-0865">Zymogen</keyword>